<reference key="1">
    <citation type="journal article" date="2003" name="Nat. Genet.">
        <title>Comparative analysis of the genome sequences of Bordetella pertussis, Bordetella parapertussis and Bordetella bronchiseptica.</title>
        <authorList>
            <person name="Parkhill J."/>
            <person name="Sebaihia M."/>
            <person name="Preston A."/>
            <person name="Murphy L.D."/>
            <person name="Thomson N.R."/>
            <person name="Harris D.E."/>
            <person name="Holden M.T.G."/>
            <person name="Churcher C.M."/>
            <person name="Bentley S.D."/>
            <person name="Mungall K.L."/>
            <person name="Cerdeno-Tarraga A.-M."/>
            <person name="Temple L."/>
            <person name="James K.D."/>
            <person name="Harris B."/>
            <person name="Quail M.A."/>
            <person name="Achtman M."/>
            <person name="Atkin R."/>
            <person name="Baker S."/>
            <person name="Basham D."/>
            <person name="Bason N."/>
            <person name="Cherevach I."/>
            <person name="Chillingworth T."/>
            <person name="Collins M."/>
            <person name="Cronin A."/>
            <person name="Davis P."/>
            <person name="Doggett J."/>
            <person name="Feltwell T."/>
            <person name="Goble A."/>
            <person name="Hamlin N."/>
            <person name="Hauser H."/>
            <person name="Holroyd S."/>
            <person name="Jagels K."/>
            <person name="Leather S."/>
            <person name="Moule S."/>
            <person name="Norberczak H."/>
            <person name="O'Neil S."/>
            <person name="Ormond D."/>
            <person name="Price C."/>
            <person name="Rabbinowitsch E."/>
            <person name="Rutter S."/>
            <person name="Sanders M."/>
            <person name="Saunders D."/>
            <person name="Seeger K."/>
            <person name="Sharp S."/>
            <person name="Simmonds M."/>
            <person name="Skelton J."/>
            <person name="Squares R."/>
            <person name="Squares S."/>
            <person name="Stevens K."/>
            <person name="Unwin L."/>
            <person name="Whitehead S."/>
            <person name="Barrell B.G."/>
            <person name="Maskell D.J."/>
        </authorList>
    </citation>
    <scope>NUCLEOTIDE SEQUENCE [LARGE SCALE GENOMIC DNA]</scope>
    <source>
        <strain>12822 / ATCC BAA-587 / NCTC 13253</strain>
    </source>
</reference>
<proteinExistence type="inferred from homology"/>
<name>AZUR_BORPA</name>
<accession>P0A322</accession>
<accession>P00278</accession>
<protein>
    <recommendedName>
        <fullName>Azurin</fullName>
    </recommendedName>
</protein>
<keyword id="KW-0186">Copper</keyword>
<keyword id="KW-1015">Disulfide bond</keyword>
<keyword id="KW-0249">Electron transport</keyword>
<keyword id="KW-0479">Metal-binding</keyword>
<keyword id="KW-0574">Periplasm</keyword>
<keyword id="KW-0732">Signal</keyword>
<keyword id="KW-0813">Transport</keyword>
<gene>
    <name type="ordered locus">BPP3406</name>
</gene>
<sequence length="150" mass="15973">MFKQVLGGMALMAAFSAPVLAAECSVDIAGTDQMQFDKKAIEVSKSCKQFTVNLKHTGKLPRNVMGHNWVLTKTADMQAVEKDGIAAGLDNQYLKAGDTRVLAHTKVLGGGESDSVTFDVAKLAAGDDYTFFCSFPGHGALMKGTLKLVD</sequence>
<organism>
    <name type="scientific">Bordetella parapertussis (strain 12822 / ATCC BAA-587 / NCTC 13253)</name>
    <dbReference type="NCBI Taxonomy" id="257311"/>
    <lineage>
        <taxon>Bacteria</taxon>
        <taxon>Pseudomonadati</taxon>
        <taxon>Pseudomonadota</taxon>
        <taxon>Betaproteobacteria</taxon>
        <taxon>Burkholderiales</taxon>
        <taxon>Alcaligenaceae</taxon>
        <taxon>Bordetella</taxon>
    </lineage>
</organism>
<dbReference type="EMBL" id="BX640433">
    <property type="protein sequence ID" value="CAE38691.1"/>
    <property type="status" value="ALT_INIT"/>
    <property type="molecule type" value="Genomic_DNA"/>
</dbReference>
<dbReference type="SMR" id="P0A322"/>
<dbReference type="KEGG" id="bpa:BPP3406"/>
<dbReference type="HOGENOM" id="CLU_112845_1_0_4"/>
<dbReference type="Proteomes" id="UP000001421">
    <property type="component" value="Chromosome"/>
</dbReference>
<dbReference type="GO" id="GO:0042597">
    <property type="term" value="C:periplasmic space"/>
    <property type="evidence" value="ECO:0007669"/>
    <property type="project" value="UniProtKB-SubCell"/>
</dbReference>
<dbReference type="GO" id="GO:0005507">
    <property type="term" value="F:copper ion binding"/>
    <property type="evidence" value="ECO:0007669"/>
    <property type="project" value="InterPro"/>
</dbReference>
<dbReference type="GO" id="GO:0009055">
    <property type="term" value="F:electron transfer activity"/>
    <property type="evidence" value="ECO:0007669"/>
    <property type="project" value="InterPro"/>
</dbReference>
<dbReference type="CDD" id="cd13922">
    <property type="entry name" value="Azurin"/>
    <property type="match status" value="1"/>
</dbReference>
<dbReference type="FunFam" id="2.60.40.420:FF:000040">
    <property type="entry name" value="Azurin"/>
    <property type="match status" value="1"/>
</dbReference>
<dbReference type="Gene3D" id="2.60.40.420">
    <property type="entry name" value="Cupredoxins - blue copper proteins"/>
    <property type="match status" value="1"/>
</dbReference>
<dbReference type="InterPro" id="IPR014068">
    <property type="entry name" value="Azurin"/>
</dbReference>
<dbReference type="InterPro" id="IPR000923">
    <property type="entry name" value="BlueCu_1"/>
</dbReference>
<dbReference type="InterPro" id="IPR028871">
    <property type="entry name" value="BlueCu_1_BS"/>
</dbReference>
<dbReference type="InterPro" id="IPR050845">
    <property type="entry name" value="Cu-binding_ET"/>
</dbReference>
<dbReference type="InterPro" id="IPR008972">
    <property type="entry name" value="Cupredoxin"/>
</dbReference>
<dbReference type="NCBIfam" id="TIGR02695">
    <property type="entry name" value="azurin"/>
    <property type="match status" value="1"/>
</dbReference>
<dbReference type="PANTHER" id="PTHR38439">
    <property type="entry name" value="AURACYANIN-B"/>
    <property type="match status" value="1"/>
</dbReference>
<dbReference type="PANTHER" id="PTHR38439:SF2">
    <property type="entry name" value="OUTER MEMBRANE PROTEIN H.8"/>
    <property type="match status" value="1"/>
</dbReference>
<dbReference type="Pfam" id="PF00127">
    <property type="entry name" value="Copper-bind"/>
    <property type="match status" value="1"/>
</dbReference>
<dbReference type="SUPFAM" id="SSF49503">
    <property type="entry name" value="Cupredoxins"/>
    <property type="match status" value="1"/>
</dbReference>
<dbReference type="PROSITE" id="PS00196">
    <property type="entry name" value="COPPER_BLUE"/>
    <property type="match status" value="1"/>
</dbReference>
<evidence type="ECO:0000250" key="1"/>
<evidence type="ECO:0000305" key="2"/>
<comment type="subcellular location">
    <subcellularLocation>
        <location evidence="1">Periplasm</location>
    </subcellularLocation>
</comment>
<comment type="sequence caution" evidence="2">
    <conflict type="erroneous initiation">
        <sequence resource="EMBL-CDS" id="CAE38691"/>
    </conflict>
</comment>
<feature type="signal peptide" evidence="1">
    <location>
        <begin position="1"/>
        <end position="21"/>
    </location>
</feature>
<feature type="chain" id="PRO_0000002860" description="Azurin">
    <location>
        <begin position="22"/>
        <end position="150"/>
    </location>
</feature>
<feature type="domain" description="Plastocyanin-like">
    <location>
        <begin position="22"/>
        <end position="150"/>
    </location>
</feature>
<feature type="binding site" evidence="1">
    <location>
        <position position="67"/>
    </location>
    <ligand>
        <name>Cu cation</name>
        <dbReference type="ChEBI" id="CHEBI:23378"/>
    </ligand>
</feature>
<feature type="binding site" evidence="1">
    <location>
        <position position="133"/>
    </location>
    <ligand>
        <name>Cu cation</name>
        <dbReference type="ChEBI" id="CHEBI:23378"/>
    </ligand>
</feature>
<feature type="binding site" evidence="1">
    <location>
        <position position="138"/>
    </location>
    <ligand>
        <name>Cu cation</name>
        <dbReference type="ChEBI" id="CHEBI:23378"/>
    </ligand>
</feature>
<feature type="binding site" evidence="1">
    <location>
        <position position="142"/>
    </location>
    <ligand>
        <name>Cu cation</name>
        <dbReference type="ChEBI" id="CHEBI:23378"/>
    </ligand>
</feature>
<feature type="disulfide bond" evidence="1">
    <location>
        <begin position="24"/>
        <end position="47"/>
    </location>
</feature>